<evidence type="ECO:0000255" key="1">
    <source>
        <dbReference type="HAMAP-Rule" id="MF_00158"/>
    </source>
</evidence>
<keyword id="KW-0067">ATP-binding</keyword>
<keyword id="KW-0963">Cytoplasm</keyword>
<keyword id="KW-0436">Ligase</keyword>
<keyword id="KW-0547">Nucleotide-binding</keyword>
<keyword id="KW-0566">Pantothenate biosynthesis</keyword>
<comment type="function">
    <text evidence="1">Catalyzes the condensation of pantoate with beta-alanine in an ATP-dependent reaction via a pantoyl-adenylate intermediate.</text>
</comment>
<comment type="catalytic activity">
    <reaction evidence="1">
        <text>(R)-pantoate + beta-alanine + ATP = (R)-pantothenate + AMP + diphosphate + H(+)</text>
        <dbReference type="Rhea" id="RHEA:10912"/>
        <dbReference type="ChEBI" id="CHEBI:15378"/>
        <dbReference type="ChEBI" id="CHEBI:15980"/>
        <dbReference type="ChEBI" id="CHEBI:29032"/>
        <dbReference type="ChEBI" id="CHEBI:30616"/>
        <dbReference type="ChEBI" id="CHEBI:33019"/>
        <dbReference type="ChEBI" id="CHEBI:57966"/>
        <dbReference type="ChEBI" id="CHEBI:456215"/>
        <dbReference type="EC" id="6.3.2.1"/>
    </reaction>
</comment>
<comment type="pathway">
    <text evidence="1">Cofactor biosynthesis; (R)-pantothenate biosynthesis; (R)-pantothenate from (R)-pantoate and beta-alanine: step 1/1.</text>
</comment>
<comment type="subunit">
    <text evidence="1">Homodimer.</text>
</comment>
<comment type="subcellular location">
    <subcellularLocation>
        <location evidence="1">Cytoplasm</location>
    </subcellularLocation>
</comment>
<comment type="miscellaneous">
    <text evidence="1">The reaction proceeds by a bi uni uni bi ping pong mechanism.</text>
</comment>
<comment type="similarity">
    <text evidence="1">Belongs to the pantothenate synthetase family.</text>
</comment>
<name>PANC_SOLM1</name>
<feature type="chain" id="PRO_1000203488" description="Pantothenate synthetase">
    <location>
        <begin position="1"/>
        <end position="285"/>
    </location>
</feature>
<feature type="active site" description="Proton donor" evidence="1">
    <location>
        <position position="37"/>
    </location>
</feature>
<feature type="binding site" evidence="1">
    <location>
        <begin position="30"/>
        <end position="37"/>
    </location>
    <ligand>
        <name>ATP</name>
        <dbReference type="ChEBI" id="CHEBI:30616"/>
    </ligand>
</feature>
<feature type="binding site" evidence="1">
    <location>
        <position position="61"/>
    </location>
    <ligand>
        <name>(R)-pantoate</name>
        <dbReference type="ChEBI" id="CHEBI:15980"/>
    </ligand>
</feature>
<feature type="binding site" evidence="1">
    <location>
        <position position="61"/>
    </location>
    <ligand>
        <name>beta-alanine</name>
        <dbReference type="ChEBI" id="CHEBI:57966"/>
    </ligand>
</feature>
<feature type="binding site" evidence="1">
    <location>
        <begin position="147"/>
        <end position="150"/>
    </location>
    <ligand>
        <name>ATP</name>
        <dbReference type="ChEBI" id="CHEBI:30616"/>
    </ligand>
</feature>
<feature type="binding site" evidence="1">
    <location>
        <position position="153"/>
    </location>
    <ligand>
        <name>(R)-pantoate</name>
        <dbReference type="ChEBI" id="CHEBI:15980"/>
    </ligand>
</feature>
<feature type="binding site" evidence="1">
    <location>
        <position position="176"/>
    </location>
    <ligand>
        <name>ATP</name>
        <dbReference type="ChEBI" id="CHEBI:30616"/>
    </ligand>
</feature>
<feature type="binding site" evidence="1">
    <location>
        <begin position="184"/>
        <end position="187"/>
    </location>
    <ligand>
        <name>ATP</name>
        <dbReference type="ChEBI" id="CHEBI:30616"/>
    </ligand>
</feature>
<proteinExistence type="inferred from homology"/>
<dbReference type="EC" id="6.3.2.1" evidence="1"/>
<dbReference type="EMBL" id="AP010904">
    <property type="protein sequence ID" value="BAH77697.1"/>
    <property type="molecule type" value="Genomic_DNA"/>
</dbReference>
<dbReference type="RefSeq" id="WP_015862822.1">
    <property type="nucleotide sequence ID" value="NC_012796.1"/>
</dbReference>
<dbReference type="SMR" id="C4XPZ7"/>
<dbReference type="STRING" id="573370.DMR_42060"/>
<dbReference type="KEGG" id="dma:DMR_42060"/>
<dbReference type="eggNOG" id="COG0414">
    <property type="taxonomic scope" value="Bacteria"/>
</dbReference>
<dbReference type="HOGENOM" id="CLU_047148_0_0_7"/>
<dbReference type="OrthoDB" id="9773087at2"/>
<dbReference type="UniPathway" id="UPA00028">
    <property type="reaction ID" value="UER00005"/>
</dbReference>
<dbReference type="Proteomes" id="UP000009071">
    <property type="component" value="Chromosome"/>
</dbReference>
<dbReference type="GO" id="GO:0005829">
    <property type="term" value="C:cytosol"/>
    <property type="evidence" value="ECO:0007669"/>
    <property type="project" value="TreeGrafter"/>
</dbReference>
<dbReference type="GO" id="GO:0005524">
    <property type="term" value="F:ATP binding"/>
    <property type="evidence" value="ECO:0007669"/>
    <property type="project" value="UniProtKB-KW"/>
</dbReference>
<dbReference type="GO" id="GO:0004592">
    <property type="term" value="F:pantoate-beta-alanine ligase activity"/>
    <property type="evidence" value="ECO:0007669"/>
    <property type="project" value="UniProtKB-UniRule"/>
</dbReference>
<dbReference type="GO" id="GO:0015940">
    <property type="term" value="P:pantothenate biosynthetic process"/>
    <property type="evidence" value="ECO:0007669"/>
    <property type="project" value="UniProtKB-UniRule"/>
</dbReference>
<dbReference type="CDD" id="cd00560">
    <property type="entry name" value="PanC"/>
    <property type="match status" value="1"/>
</dbReference>
<dbReference type="FunFam" id="3.40.50.620:FF:000114">
    <property type="entry name" value="Pantothenate synthetase"/>
    <property type="match status" value="1"/>
</dbReference>
<dbReference type="Gene3D" id="3.40.50.620">
    <property type="entry name" value="HUPs"/>
    <property type="match status" value="1"/>
</dbReference>
<dbReference type="Gene3D" id="3.30.1300.10">
    <property type="entry name" value="Pantoate-beta-alanine ligase, C-terminal domain"/>
    <property type="match status" value="1"/>
</dbReference>
<dbReference type="HAMAP" id="MF_00158">
    <property type="entry name" value="PanC"/>
    <property type="match status" value="1"/>
</dbReference>
<dbReference type="InterPro" id="IPR003721">
    <property type="entry name" value="Pantoate_ligase"/>
</dbReference>
<dbReference type="InterPro" id="IPR042176">
    <property type="entry name" value="Pantoate_ligase_C"/>
</dbReference>
<dbReference type="InterPro" id="IPR014729">
    <property type="entry name" value="Rossmann-like_a/b/a_fold"/>
</dbReference>
<dbReference type="NCBIfam" id="TIGR00018">
    <property type="entry name" value="panC"/>
    <property type="match status" value="1"/>
</dbReference>
<dbReference type="PANTHER" id="PTHR21299">
    <property type="entry name" value="CYTIDYLATE KINASE/PANTOATE-BETA-ALANINE LIGASE"/>
    <property type="match status" value="1"/>
</dbReference>
<dbReference type="PANTHER" id="PTHR21299:SF1">
    <property type="entry name" value="PANTOATE--BETA-ALANINE LIGASE"/>
    <property type="match status" value="1"/>
</dbReference>
<dbReference type="Pfam" id="PF02569">
    <property type="entry name" value="Pantoate_ligase"/>
    <property type="match status" value="1"/>
</dbReference>
<dbReference type="SUPFAM" id="SSF52374">
    <property type="entry name" value="Nucleotidylyl transferase"/>
    <property type="match status" value="1"/>
</dbReference>
<organism>
    <name type="scientific">Solidesulfovibrio magneticus (strain ATCC 700980 / DSM 13731 / RS-1)</name>
    <name type="common">Desulfovibrio magneticus</name>
    <dbReference type="NCBI Taxonomy" id="573370"/>
    <lineage>
        <taxon>Bacteria</taxon>
        <taxon>Pseudomonadati</taxon>
        <taxon>Thermodesulfobacteriota</taxon>
        <taxon>Desulfovibrionia</taxon>
        <taxon>Desulfovibrionales</taxon>
        <taxon>Desulfovibrionaceae</taxon>
        <taxon>Solidesulfovibrio</taxon>
    </lineage>
</organism>
<accession>C4XPZ7</accession>
<gene>
    <name evidence="1" type="primary">panC</name>
    <name type="ordered locus">DMR_42060</name>
</gene>
<reference key="1">
    <citation type="journal article" date="2009" name="Genome Res.">
        <title>Whole genome sequence of Desulfovibrio magneticus strain RS-1 revealed common gene clusters in magnetotactic bacteria.</title>
        <authorList>
            <person name="Nakazawa H."/>
            <person name="Arakaki A."/>
            <person name="Narita-Yamada S."/>
            <person name="Yashiro I."/>
            <person name="Jinno K."/>
            <person name="Aoki N."/>
            <person name="Tsuruyama A."/>
            <person name="Okamura Y."/>
            <person name="Tanikawa S."/>
            <person name="Fujita N."/>
            <person name="Takeyama H."/>
            <person name="Matsunaga T."/>
        </authorList>
    </citation>
    <scope>NUCLEOTIDE SEQUENCE [LARGE SCALE GENOMIC DNA]</scope>
    <source>
        <strain>ATCC 700980 / DSM 13731 / RS-1</strain>
    </source>
</reference>
<protein>
    <recommendedName>
        <fullName evidence="1">Pantothenate synthetase</fullName>
        <shortName evidence="1">PS</shortName>
        <ecNumber evidence="1">6.3.2.1</ecNumber>
    </recommendedName>
    <alternativeName>
        <fullName evidence="1">Pantoate--beta-alanine ligase</fullName>
    </alternativeName>
    <alternativeName>
        <fullName evidence="1">Pantoate-activating enzyme</fullName>
    </alternativeName>
</protein>
<sequence length="285" mass="30910">MEIIKEPSALRELAGQWTRQGRSVGFVPTMGYLHAGHESLMRLARGRAETVVASVFVNPTQFGPGEDLNAYPRDLERDAALAKAAGVDVLFAPSPEAMYEPAAATWVEVPTLARHLCGASRPTHFRGVCTVVSKLFLLVRPTVAVFGQKDWQQLAILRRMNADLGFGVEIVGGPIVREADGLALSSRNVRLTPQEREQAPGINQGLALAEAMVRDGETAAGRILDAVRAHYAAHVPLGEIDYLSCVDPDSLEMVEPIDRPALFATAVRFSAVRLIDNRLAADLPR</sequence>